<feature type="chain" id="PRO_1000085692" description="GTP 3',8-cyclase">
    <location>
        <begin position="1"/>
        <end position="342"/>
    </location>
</feature>
<feature type="domain" description="Radical SAM core" evidence="2">
    <location>
        <begin position="18"/>
        <end position="247"/>
    </location>
</feature>
<feature type="binding site" evidence="1">
    <location>
        <position position="27"/>
    </location>
    <ligand>
        <name>GTP</name>
        <dbReference type="ChEBI" id="CHEBI:37565"/>
    </ligand>
</feature>
<feature type="binding site" evidence="1">
    <location>
        <position position="34"/>
    </location>
    <ligand>
        <name>[4Fe-4S] cluster</name>
        <dbReference type="ChEBI" id="CHEBI:49883"/>
        <label>1</label>
        <note>4Fe-4S-S-AdoMet</note>
    </ligand>
</feature>
<feature type="binding site" evidence="1">
    <location>
        <position position="38"/>
    </location>
    <ligand>
        <name>[4Fe-4S] cluster</name>
        <dbReference type="ChEBI" id="CHEBI:49883"/>
        <label>1</label>
        <note>4Fe-4S-S-AdoMet</note>
    </ligand>
</feature>
<feature type="binding site" evidence="1">
    <location>
        <position position="40"/>
    </location>
    <ligand>
        <name>S-adenosyl-L-methionine</name>
        <dbReference type="ChEBI" id="CHEBI:59789"/>
    </ligand>
</feature>
<feature type="binding site" evidence="1">
    <location>
        <position position="41"/>
    </location>
    <ligand>
        <name>[4Fe-4S] cluster</name>
        <dbReference type="ChEBI" id="CHEBI:49883"/>
        <label>1</label>
        <note>4Fe-4S-S-AdoMet</note>
    </ligand>
</feature>
<feature type="binding site" evidence="1">
    <location>
        <position position="81"/>
    </location>
    <ligand>
        <name>GTP</name>
        <dbReference type="ChEBI" id="CHEBI:37565"/>
    </ligand>
</feature>
<feature type="binding site" evidence="1">
    <location>
        <position position="85"/>
    </location>
    <ligand>
        <name>S-adenosyl-L-methionine</name>
        <dbReference type="ChEBI" id="CHEBI:59789"/>
    </ligand>
</feature>
<feature type="binding site" evidence="1">
    <location>
        <position position="112"/>
    </location>
    <ligand>
        <name>GTP</name>
        <dbReference type="ChEBI" id="CHEBI:37565"/>
    </ligand>
</feature>
<feature type="binding site" evidence="1">
    <location>
        <position position="136"/>
    </location>
    <ligand>
        <name>S-adenosyl-L-methionine</name>
        <dbReference type="ChEBI" id="CHEBI:59789"/>
    </ligand>
</feature>
<feature type="binding site" evidence="1">
    <location>
        <position position="173"/>
    </location>
    <ligand>
        <name>GTP</name>
        <dbReference type="ChEBI" id="CHEBI:37565"/>
    </ligand>
</feature>
<feature type="binding site" evidence="1">
    <location>
        <position position="207"/>
    </location>
    <ligand>
        <name>S-adenosyl-L-methionine</name>
        <dbReference type="ChEBI" id="CHEBI:59789"/>
    </ligand>
</feature>
<feature type="binding site" evidence="1">
    <location>
        <position position="270"/>
    </location>
    <ligand>
        <name>[4Fe-4S] cluster</name>
        <dbReference type="ChEBI" id="CHEBI:49883"/>
        <label>2</label>
        <note>4Fe-4S-substrate</note>
    </ligand>
</feature>
<feature type="binding site" evidence="1">
    <location>
        <position position="273"/>
    </location>
    <ligand>
        <name>[4Fe-4S] cluster</name>
        <dbReference type="ChEBI" id="CHEBI:49883"/>
        <label>2</label>
        <note>4Fe-4S-substrate</note>
    </ligand>
</feature>
<feature type="binding site" evidence="1">
    <location>
        <begin position="275"/>
        <end position="277"/>
    </location>
    <ligand>
        <name>GTP</name>
        <dbReference type="ChEBI" id="CHEBI:37565"/>
    </ligand>
</feature>
<feature type="binding site" evidence="1">
    <location>
        <position position="287"/>
    </location>
    <ligand>
        <name>[4Fe-4S] cluster</name>
        <dbReference type="ChEBI" id="CHEBI:49883"/>
        <label>2</label>
        <note>4Fe-4S-substrate</note>
    </ligand>
</feature>
<keyword id="KW-0004">4Fe-4S</keyword>
<keyword id="KW-0342">GTP-binding</keyword>
<keyword id="KW-0408">Iron</keyword>
<keyword id="KW-0411">Iron-sulfur</keyword>
<keyword id="KW-0456">Lyase</keyword>
<keyword id="KW-0479">Metal-binding</keyword>
<keyword id="KW-0501">Molybdenum cofactor biosynthesis</keyword>
<keyword id="KW-0547">Nucleotide-binding</keyword>
<keyword id="KW-1185">Reference proteome</keyword>
<keyword id="KW-0949">S-adenosyl-L-methionine</keyword>
<comment type="function">
    <text evidence="1">Catalyzes the cyclization of GTP to (8S)-3',8-cyclo-7,8-dihydroguanosine 5'-triphosphate.</text>
</comment>
<comment type="catalytic activity">
    <reaction evidence="1">
        <text>GTP + AH2 + S-adenosyl-L-methionine = (8S)-3',8-cyclo-7,8-dihydroguanosine 5'-triphosphate + 5'-deoxyadenosine + L-methionine + A + H(+)</text>
        <dbReference type="Rhea" id="RHEA:49576"/>
        <dbReference type="ChEBI" id="CHEBI:13193"/>
        <dbReference type="ChEBI" id="CHEBI:15378"/>
        <dbReference type="ChEBI" id="CHEBI:17319"/>
        <dbReference type="ChEBI" id="CHEBI:17499"/>
        <dbReference type="ChEBI" id="CHEBI:37565"/>
        <dbReference type="ChEBI" id="CHEBI:57844"/>
        <dbReference type="ChEBI" id="CHEBI:59789"/>
        <dbReference type="ChEBI" id="CHEBI:131766"/>
        <dbReference type="EC" id="4.1.99.22"/>
    </reaction>
</comment>
<comment type="cofactor">
    <cofactor evidence="1">
        <name>[4Fe-4S] cluster</name>
        <dbReference type="ChEBI" id="CHEBI:49883"/>
    </cofactor>
    <text evidence="1">Binds 2 [4Fe-4S] clusters. Binds 1 [4Fe-4S] cluster coordinated with 3 cysteines and an exchangeable S-adenosyl-L-methionine and 1 [4Fe-4S] cluster coordinated with 3 cysteines and the GTP-derived substrate.</text>
</comment>
<comment type="pathway">
    <text evidence="1">Cofactor biosynthesis; molybdopterin biosynthesis.</text>
</comment>
<comment type="subunit">
    <text evidence="1">Monomer and homodimer.</text>
</comment>
<comment type="similarity">
    <text evidence="1">Belongs to the radical SAM superfamily. MoaA family.</text>
</comment>
<gene>
    <name evidence="1" type="primary">moaA</name>
    <name type="ordered locus">AHA_1583</name>
</gene>
<evidence type="ECO:0000255" key="1">
    <source>
        <dbReference type="HAMAP-Rule" id="MF_01225"/>
    </source>
</evidence>
<evidence type="ECO:0000255" key="2">
    <source>
        <dbReference type="PROSITE-ProRule" id="PRU01266"/>
    </source>
</evidence>
<accession>A0KIL8</accession>
<proteinExistence type="inferred from homology"/>
<organism>
    <name type="scientific">Aeromonas hydrophila subsp. hydrophila (strain ATCC 7966 / DSM 30187 / BCRC 13018 / CCUG 14551 / JCM 1027 / KCTC 2358 / NCIMB 9240 / NCTC 8049)</name>
    <dbReference type="NCBI Taxonomy" id="380703"/>
    <lineage>
        <taxon>Bacteria</taxon>
        <taxon>Pseudomonadati</taxon>
        <taxon>Pseudomonadota</taxon>
        <taxon>Gammaproteobacteria</taxon>
        <taxon>Aeromonadales</taxon>
        <taxon>Aeromonadaceae</taxon>
        <taxon>Aeromonas</taxon>
    </lineage>
</organism>
<reference key="1">
    <citation type="journal article" date="2006" name="J. Bacteriol.">
        <title>Genome sequence of Aeromonas hydrophila ATCC 7966T: jack of all trades.</title>
        <authorList>
            <person name="Seshadri R."/>
            <person name="Joseph S.W."/>
            <person name="Chopra A.K."/>
            <person name="Sha J."/>
            <person name="Shaw J."/>
            <person name="Graf J."/>
            <person name="Haft D.H."/>
            <person name="Wu M."/>
            <person name="Ren Q."/>
            <person name="Rosovitz M.J."/>
            <person name="Madupu R."/>
            <person name="Tallon L."/>
            <person name="Kim M."/>
            <person name="Jin S."/>
            <person name="Vuong H."/>
            <person name="Stine O.C."/>
            <person name="Ali A."/>
            <person name="Horneman A.J."/>
            <person name="Heidelberg J.F."/>
        </authorList>
    </citation>
    <scope>NUCLEOTIDE SEQUENCE [LARGE SCALE GENOMIC DNA]</scope>
    <source>
        <strain>ATCC 7966 / DSM 30187 / BCRC 13018 / CCUG 14551 / JCM 1027 / KCTC 2358 / NCIMB 9240 / NCTC 8049</strain>
    </source>
</reference>
<protein>
    <recommendedName>
        <fullName evidence="1">GTP 3',8-cyclase</fullName>
        <ecNumber evidence="1">4.1.99.22</ecNumber>
    </recommendedName>
    <alternativeName>
        <fullName evidence="1">Molybdenum cofactor biosynthesis protein A</fullName>
    </alternativeName>
</protein>
<name>MOAA_AERHH</name>
<sequence>MPWPPVFGKVFMSPLQDGFSRRFYYLRLSITDVCNFRCTYCLPDGYRPPAGGKVGRQPFLSLEEIRRVVSGFAAMGTRKVRLTGGEPSLRRDFTAIIETVANTPGIEKVAMTTNGYRLKERAREWFDAGLTALNVSVDSLDPRQFHQITGENKLAEVMDGIEAALAAGFKSVKINAVLLKGLNDHQLDAFLAWIRHKPIELRFIELMQTGEMDTLFRDHHASGALIKQRLLDAGWLQQLRGADDGPAQVFMHPESMGGVGLIMPYSKDFCAGCNRLRVSSLGKLHLCLFGDHGVELRDLLTADGQQDELQQRIRSALVGKAATHRLHEGNAGMTPHLASIGG</sequence>
<dbReference type="EC" id="4.1.99.22" evidence="1"/>
<dbReference type="EMBL" id="CP000462">
    <property type="protein sequence ID" value="ABK38084.1"/>
    <property type="molecule type" value="Genomic_DNA"/>
</dbReference>
<dbReference type="RefSeq" id="YP_856119.1">
    <property type="nucleotide sequence ID" value="NC_008570.1"/>
</dbReference>
<dbReference type="SMR" id="A0KIL8"/>
<dbReference type="STRING" id="380703.AHA_1583"/>
<dbReference type="EnsemblBacteria" id="ABK38084">
    <property type="protein sequence ID" value="ABK38084"/>
    <property type="gene ID" value="AHA_1583"/>
</dbReference>
<dbReference type="KEGG" id="aha:AHA_1583"/>
<dbReference type="PATRIC" id="fig|380703.7.peg.1594"/>
<dbReference type="eggNOG" id="COG2896">
    <property type="taxonomic scope" value="Bacteria"/>
</dbReference>
<dbReference type="HOGENOM" id="CLU_009273_0_1_6"/>
<dbReference type="OrthoDB" id="9763993at2"/>
<dbReference type="UniPathway" id="UPA00344"/>
<dbReference type="Proteomes" id="UP000000756">
    <property type="component" value="Chromosome"/>
</dbReference>
<dbReference type="GO" id="GO:0051539">
    <property type="term" value="F:4 iron, 4 sulfur cluster binding"/>
    <property type="evidence" value="ECO:0007669"/>
    <property type="project" value="UniProtKB-UniRule"/>
</dbReference>
<dbReference type="GO" id="GO:0061799">
    <property type="term" value="F:cyclic pyranopterin monophosphate synthase activity"/>
    <property type="evidence" value="ECO:0007669"/>
    <property type="project" value="TreeGrafter"/>
</dbReference>
<dbReference type="GO" id="GO:0061798">
    <property type="term" value="F:GTP 3',8'-cyclase activity"/>
    <property type="evidence" value="ECO:0007669"/>
    <property type="project" value="UniProtKB-UniRule"/>
</dbReference>
<dbReference type="GO" id="GO:0005525">
    <property type="term" value="F:GTP binding"/>
    <property type="evidence" value="ECO:0007669"/>
    <property type="project" value="UniProtKB-UniRule"/>
</dbReference>
<dbReference type="GO" id="GO:0046872">
    <property type="term" value="F:metal ion binding"/>
    <property type="evidence" value="ECO:0007669"/>
    <property type="project" value="UniProtKB-KW"/>
</dbReference>
<dbReference type="GO" id="GO:1904047">
    <property type="term" value="F:S-adenosyl-L-methionine binding"/>
    <property type="evidence" value="ECO:0007669"/>
    <property type="project" value="UniProtKB-UniRule"/>
</dbReference>
<dbReference type="GO" id="GO:0006777">
    <property type="term" value="P:Mo-molybdopterin cofactor biosynthetic process"/>
    <property type="evidence" value="ECO:0007669"/>
    <property type="project" value="UniProtKB-UniRule"/>
</dbReference>
<dbReference type="CDD" id="cd01335">
    <property type="entry name" value="Radical_SAM"/>
    <property type="match status" value="1"/>
</dbReference>
<dbReference type="CDD" id="cd21117">
    <property type="entry name" value="Twitch_MoaA"/>
    <property type="match status" value="1"/>
</dbReference>
<dbReference type="FunFam" id="3.20.20.70:FF:000057">
    <property type="entry name" value="GTP 3',8-cyclase"/>
    <property type="match status" value="1"/>
</dbReference>
<dbReference type="Gene3D" id="3.20.20.70">
    <property type="entry name" value="Aldolase class I"/>
    <property type="match status" value="1"/>
</dbReference>
<dbReference type="HAMAP" id="MF_01225_B">
    <property type="entry name" value="MoaA_B"/>
    <property type="match status" value="1"/>
</dbReference>
<dbReference type="InterPro" id="IPR013785">
    <property type="entry name" value="Aldolase_TIM"/>
</dbReference>
<dbReference type="InterPro" id="IPR006638">
    <property type="entry name" value="Elp3/MiaA/NifB-like_rSAM"/>
</dbReference>
<dbReference type="InterPro" id="IPR013483">
    <property type="entry name" value="MoaA"/>
</dbReference>
<dbReference type="InterPro" id="IPR000385">
    <property type="entry name" value="MoaA_NifB_PqqE_Fe-S-bd_CS"/>
</dbReference>
<dbReference type="InterPro" id="IPR010505">
    <property type="entry name" value="MoaA_twitch"/>
</dbReference>
<dbReference type="InterPro" id="IPR050105">
    <property type="entry name" value="MoCo_biosynth_MoaA/MoaC"/>
</dbReference>
<dbReference type="InterPro" id="IPR007197">
    <property type="entry name" value="rSAM"/>
</dbReference>
<dbReference type="NCBIfam" id="TIGR02666">
    <property type="entry name" value="moaA"/>
    <property type="match status" value="1"/>
</dbReference>
<dbReference type="PANTHER" id="PTHR22960:SF28">
    <property type="entry name" value="GTP 3',8-CYCLASE"/>
    <property type="match status" value="1"/>
</dbReference>
<dbReference type="PANTHER" id="PTHR22960">
    <property type="entry name" value="MOLYBDOPTERIN COFACTOR SYNTHESIS PROTEIN A"/>
    <property type="match status" value="1"/>
</dbReference>
<dbReference type="Pfam" id="PF13353">
    <property type="entry name" value="Fer4_12"/>
    <property type="match status" value="1"/>
</dbReference>
<dbReference type="Pfam" id="PF06463">
    <property type="entry name" value="Mob_synth_C"/>
    <property type="match status" value="1"/>
</dbReference>
<dbReference type="Pfam" id="PF04055">
    <property type="entry name" value="Radical_SAM"/>
    <property type="match status" value="1"/>
</dbReference>
<dbReference type="SFLD" id="SFLDG01383">
    <property type="entry name" value="cyclic_pyranopterin_phosphate"/>
    <property type="match status" value="1"/>
</dbReference>
<dbReference type="SFLD" id="SFLDS00029">
    <property type="entry name" value="Radical_SAM"/>
    <property type="match status" value="1"/>
</dbReference>
<dbReference type="SMART" id="SM00729">
    <property type="entry name" value="Elp3"/>
    <property type="match status" value="1"/>
</dbReference>
<dbReference type="SUPFAM" id="SSF102114">
    <property type="entry name" value="Radical SAM enzymes"/>
    <property type="match status" value="1"/>
</dbReference>
<dbReference type="PROSITE" id="PS01305">
    <property type="entry name" value="MOAA_NIFB_PQQE"/>
    <property type="match status" value="1"/>
</dbReference>
<dbReference type="PROSITE" id="PS51918">
    <property type="entry name" value="RADICAL_SAM"/>
    <property type="match status" value="1"/>
</dbReference>